<sequence>MESTFIMIKPDGVQRGLIGEIISRFEKKGFYLKALKLVNVERSFAEKHYADLSSKPFFQGLVDYIISGPVVAMVWEGKSVVTTGRKIIGATNPLVSEPGTIRGDFAVDIGRNVIHGSDSIESANKEIALWFPEGLADWQSSQHPWIYEK</sequence>
<comment type="function">
    <text>Major role in the synthesis of nucleoside triphosphates other than ATP. The ATP gamma phosphate is transferred to the NDP beta phosphate via a ping-pong mechanism, using a phosphorylated active-site intermediate. Also exhibits a kinase-like activity towards histone H1.</text>
</comment>
<comment type="catalytic activity">
    <reaction>
        <text>a 2'-deoxyribonucleoside 5'-diphosphate + ATP = a 2'-deoxyribonucleoside 5'-triphosphate + ADP</text>
        <dbReference type="Rhea" id="RHEA:44640"/>
        <dbReference type="ChEBI" id="CHEBI:30616"/>
        <dbReference type="ChEBI" id="CHEBI:61560"/>
        <dbReference type="ChEBI" id="CHEBI:73316"/>
        <dbReference type="ChEBI" id="CHEBI:456216"/>
        <dbReference type="EC" id="2.7.4.6"/>
    </reaction>
</comment>
<comment type="catalytic activity">
    <reaction>
        <text>a ribonucleoside 5'-diphosphate + ATP = a ribonucleoside 5'-triphosphate + ADP</text>
        <dbReference type="Rhea" id="RHEA:18113"/>
        <dbReference type="ChEBI" id="CHEBI:30616"/>
        <dbReference type="ChEBI" id="CHEBI:57930"/>
        <dbReference type="ChEBI" id="CHEBI:61557"/>
        <dbReference type="ChEBI" id="CHEBI:456216"/>
        <dbReference type="EC" id="2.7.4.6"/>
    </reaction>
</comment>
<comment type="cofactor">
    <cofactor evidence="1">
        <name>Mg(2+)</name>
        <dbReference type="ChEBI" id="CHEBI:18420"/>
    </cofactor>
</comment>
<comment type="PTM">
    <text>Autophosphorylated.</text>
</comment>
<comment type="similarity">
    <text evidence="2">Belongs to the NDK family.</text>
</comment>
<organism>
    <name type="scientific">Saccharum officinarum</name>
    <name type="common">Sugarcane</name>
    <dbReference type="NCBI Taxonomy" id="4547"/>
    <lineage>
        <taxon>Eukaryota</taxon>
        <taxon>Viridiplantae</taxon>
        <taxon>Streptophyta</taxon>
        <taxon>Embryophyta</taxon>
        <taxon>Tracheophyta</taxon>
        <taxon>Spermatophyta</taxon>
        <taxon>Magnoliopsida</taxon>
        <taxon>Liliopsida</taxon>
        <taxon>Poales</taxon>
        <taxon>Poaceae</taxon>
        <taxon>PACMAD clade</taxon>
        <taxon>Panicoideae</taxon>
        <taxon>Andropogonodae</taxon>
        <taxon>Andropogoneae</taxon>
        <taxon>Saccharinae</taxon>
        <taxon>Saccharum</taxon>
        <taxon>Saccharum officinarum species complex</taxon>
    </lineage>
</organism>
<evidence type="ECO:0000250" key="1"/>
<evidence type="ECO:0000305" key="2"/>
<proteinExistence type="evidence at protein level"/>
<keyword id="KW-0067">ATP-binding</keyword>
<keyword id="KW-0903">Direct protein sequencing</keyword>
<keyword id="KW-0418">Kinase</keyword>
<keyword id="KW-0460">Magnesium</keyword>
<keyword id="KW-0479">Metal-binding</keyword>
<keyword id="KW-0546">Nucleotide metabolism</keyword>
<keyword id="KW-0547">Nucleotide-binding</keyword>
<keyword id="KW-0597">Phosphoprotein</keyword>
<keyword id="KW-0808">Transferase</keyword>
<gene>
    <name type="primary">NDPK1</name>
</gene>
<feature type="chain" id="PRO_0000137143" description="Nucleoside diphosphate kinase 1">
    <location>
        <begin position="1"/>
        <end position="149"/>
    </location>
</feature>
<feature type="active site" description="Pros-phosphohistidine intermediate" evidence="1">
    <location>
        <position position="115"/>
    </location>
</feature>
<feature type="binding site" evidence="1">
    <location>
        <position position="9"/>
    </location>
    <ligand>
        <name>ATP</name>
        <dbReference type="ChEBI" id="CHEBI:30616"/>
    </ligand>
</feature>
<feature type="binding site" evidence="1">
    <location>
        <position position="57"/>
    </location>
    <ligand>
        <name>ATP</name>
        <dbReference type="ChEBI" id="CHEBI:30616"/>
    </ligand>
</feature>
<feature type="binding site" evidence="1">
    <location>
        <position position="85"/>
    </location>
    <ligand>
        <name>ATP</name>
        <dbReference type="ChEBI" id="CHEBI:30616"/>
    </ligand>
</feature>
<feature type="binding site" evidence="1">
    <location>
        <position position="91"/>
    </location>
    <ligand>
        <name>ATP</name>
        <dbReference type="ChEBI" id="CHEBI:30616"/>
    </ligand>
</feature>
<feature type="binding site" evidence="1">
    <location>
        <position position="102"/>
    </location>
    <ligand>
        <name>ATP</name>
        <dbReference type="ChEBI" id="CHEBI:30616"/>
    </ligand>
</feature>
<feature type="binding site" evidence="1">
    <location>
        <position position="112"/>
    </location>
    <ligand>
        <name>ATP</name>
        <dbReference type="ChEBI" id="CHEBI:30616"/>
    </ligand>
</feature>
<accession>P93554</accession>
<name>NDK1_SACOF</name>
<dbReference type="EC" id="2.7.4.6"/>
<dbReference type="EMBL" id="U55019">
    <property type="protein sequence ID" value="AAB40609.1"/>
    <property type="molecule type" value="mRNA"/>
</dbReference>
<dbReference type="SMR" id="P93554"/>
<dbReference type="GO" id="GO:0005524">
    <property type="term" value="F:ATP binding"/>
    <property type="evidence" value="ECO:0007669"/>
    <property type="project" value="UniProtKB-KW"/>
</dbReference>
<dbReference type="GO" id="GO:0046872">
    <property type="term" value="F:metal ion binding"/>
    <property type="evidence" value="ECO:0007669"/>
    <property type="project" value="UniProtKB-KW"/>
</dbReference>
<dbReference type="GO" id="GO:0004550">
    <property type="term" value="F:nucleoside diphosphate kinase activity"/>
    <property type="evidence" value="ECO:0007669"/>
    <property type="project" value="UniProtKB-EC"/>
</dbReference>
<dbReference type="GO" id="GO:0006241">
    <property type="term" value="P:CTP biosynthetic process"/>
    <property type="evidence" value="ECO:0007669"/>
    <property type="project" value="InterPro"/>
</dbReference>
<dbReference type="GO" id="GO:0006183">
    <property type="term" value="P:GTP biosynthetic process"/>
    <property type="evidence" value="ECO:0007669"/>
    <property type="project" value="InterPro"/>
</dbReference>
<dbReference type="GO" id="GO:0006228">
    <property type="term" value="P:UTP biosynthetic process"/>
    <property type="evidence" value="ECO:0007669"/>
    <property type="project" value="InterPro"/>
</dbReference>
<dbReference type="CDD" id="cd04413">
    <property type="entry name" value="NDPk_I"/>
    <property type="match status" value="1"/>
</dbReference>
<dbReference type="FunFam" id="3.30.70.141:FF:000002">
    <property type="entry name" value="Nucleoside diphosphate kinase"/>
    <property type="match status" value="1"/>
</dbReference>
<dbReference type="Gene3D" id="3.30.70.141">
    <property type="entry name" value="Nucleoside diphosphate kinase-like domain"/>
    <property type="match status" value="1"/>
</dbReference>
<dbReference type="HAMAP" id="MF_00451">
    <property type="entry name" value="NDP_kinase"/>
    <property type="match status" value="1"/>
</dbReference>
<dbReference type="InterPro" id="IPR034907">
    <property type="entry name" value="NDK-like_dom"/>
</dbReference>
<dbReference type="InterPro" id="IPR036850">
    <property type="entry name" value="NDK-like_dom_sf"/>
</dbReference>
<dbReference type="InterPro" id="IPR001564">
    <property type="entry name" value="Nucleoside_diP_kinase"/>
</dbReference>
<dbReference type="InterPro" id="IPR023005">
    <property type="entry name" value="Nucleoside_diP_kinase_AS"/>
</dbReference>
<dbReference type="NCBIfam" id="NF001908">
    <property type="entry name" value="PRK00668.1"/>
    <property type="match status" value="1"/>
</dbReference>
<dbReference type="PANTHER" id="PTHR11349">
    <property type="entry name" value="NUCLEOSIDE DIPHOSPHATE KINASE"/>
    <property type="match status" value="1"/>
</dbReference>
<dbReference type="Pfam" id="PF00334">
    <property type="entry name" value="NDK"/>
    <property type="match status" value="1"/>
</dbReference>
<dbReference type="PRINTS" id="PR01243">
    <property type="entry name" value="NUCDPKINASE"/>
</dbReference>
<dbReference type="SMART" id="SM00562">
    <property type="entry name" value="NDK"/>
    <property type="match status" value="1"/>
</dbReference>
<dbReference type="SUPFAM" id="SSF54919">
    <property type="entry name" value="Nucleoside diphosphate kinase, NDK"/>
    <property type="match status" value="1"/>
</dbReference>
<dbReference type="PROSITE" id="PS00469">
    <property type="entry name" value="NDPK"/>
    <property type="match status" value="1"/>
</dbReference>
<dbReference type="PROSITE" id="PS51374">
    <property type="entry name" value="NDPK_LIKE"/>
    <property type="match status" value="1"/>
</dbReference>
<reference key="1">
    <citation type="journal article" date="1994" name="Plant Physiol.">
        <title>Characterization of a low molecular mass autophosphorylating protein in cultured sugarcane cells and its identification as a nucleoside diphosphate kinase.</title>
        <authorList>
            <person name="Moisyadi S."/>
            <person name="Dharmasiri S."/>
            <person name="Harrington H.M."/>
            <person name="Lukas T.J."/>
        </authorList>
    </citation>
    <scope>NUCLEOTIDE SEQUENCE [MRNA]</scope>
    <scope>PARTIAL PROTEIN SEQUENCE</scope>
    <source>
        <strain>cv. H50-7209</strain>
    </source>
</reference>
<protein>
    <recommendedName>
        <fullName>Nucleoside diphosphate kinase 1</fullName>
        <ecNumber>2.7.4.6</ecNumber>
    </recommendedName>
    <alternativeName>
        <fullName>Nucleoside diphosphate kinase I</fullName>
        <shortName>NDK I</shortName>
        <shortName>NDP kinase I</shortName>
        <shortName>NDPK I</shortName>
    </alternativeName>
    <alternativeName>
        <fullName>PP18</fullName>
    </alternativeName>
</protein>